<evidence type="ECO:0000250" key="1"/>
<evidence type="ECO:0000269" key="2">
    <source>
    </source>
</evidence>
<evidence type="ECO:0000269" key="3">
    <source>
    </source>
</evidence>
<evidence type="ECO:0000305" key="4"/>
<keyword id="KW-0539">Nucleus</keyword>
<keyword id="KW-1185">Reference proteome</keyword>
<keyword id="KW-0833">Ubl conjugation pathway</keyword>
<feature type="chain" id="PRO_0000375244" description="SKP1-like protein 3">
    <location>
        <begin position="1"/>
        <end position="163"/>
    </location>
</feature>
<feature type="region of interest" description="Interaction with the F-box domain of F-box proteins" evidence="1">
    <location>
        <begin position="105"/>
        <end position="163"/>
    </location>
</feature>
<gene>
    <name type="primary">ASK3</name>
    <name type="ordered locus">At2g25700</name>
    <name type="ORF">F3N11.15</name>
</gene>
<name>ASK3_ARATH</name>
<organism>
    <name type="scientific">Arabidopsis thaliana</name>
    <name type="common">Mouse-ear cress</name>
    <dbReference type="NCBI Taxonomy" id="3702"/>
    <lineage>
        <taxon>Eukaryota</taxon>
        <taxon>Viridiplantae</taxon>
        <taxon>Streptophyta</taxon>
        <taxon>Embryophyta</taxon>
        <taxon>Tracheophyta</taxon>
        <taxon>Spermatophyta</taxon>
        <taxon>Magnoliopsida</taxon>
        <taxon>eudicotyledons</taxon>
        <taxon>Gunneridae</taxon>
        <taxon>Pentapetalae</taxon>
        <taxon>rosids</taxon>
        <taxon>malvids</taxon>
        <taxon>Brassicales</taxon>
        <taxon>Brassicaceae</taxon>
        <taxon>Camelineae</taxon>
        <taxon>Arabidopsis</taxon>
    </lineage>
</organism>
<proteinExistence type="evidence at protein level"/>
<accession>Q9SL93</accession>
<comment type="function">
    <text evidence="1">Involved in ubiquitination and subsequent proteasomal degradation of target proteins. Together with CUL1, RBX1 and a F-box protein, it forms a SCF E3 ubiquitin ligase complex. The functional specificity of this complex depends on the type of F-box protein. In the SCF complex, it serves as an adapter that links the F-box protein to CUL1 (By similarity).</text>
</comment>
<comment type="pathway">
    <text>Protein modification; protein ubiquitination.</text>
</comment>
<comment type="subunit">
    <text evidence="1 3">Part of a SCF (SKP1-cullin-F-box) protein ligase complex (By similarity). Interacts with ADO3/FKF1 and At3g61590.</text>
</comment>
<comment type="subcellular location">
    <subcellularLocation>
        <location evidence="1">Nucleus</location>
    </subcellularLocation>
</comment>
<comment type="tissue specificity">
    <text evidence="2">Highly expressed in siliques.</text>
</comment>
<comment type="developmental stage">
    <text evidence="2">In flowers, mostly restricted to sepals and pedicels.</text>
</comment>
<comment type="similarity">
    <text evidence="4">Belongs to the SKP1 family.</text>
</comment>
<protein>
    <recommendedName>
        <fullName>SKP1-like protein 3</fullName>
        <shortName>AtSK3</shortName>
    </recommendedName>
</protein>
<reference key="1">
    <citation type="journal article" date="1999" name="Nature">
        <title>Sequence and analysis of chromosome 2 of the plant Arabidopsis thaliana.</title>
        <authorList>
            <person name="Lin X."/>
            <person name="Kaul S."/>
            <person name="Rounsley S.D."/>
            <person name="Shea T.P."/>
            <person name="Benito M.-I."/>
            <person name="Town C.D."/>
            <person name="Fujii C.Y."/>
            <person name="Mason T.M."/>
            <person name="Bowman C.L."/>
            <person name="Barnstead M.E."/>
            <person name="Feldblyum T.V."/>
            <person name="Buell C.R."/>
            <person name="Ketchum K.A."/>
            <person name="Lee J.J."/>
            <person name="Ronning C.M."/>
            <person name="Koo H.L."/>
            <person name="Moffat K.S."/>
            <person name="Cronin L.A."/>
            <person name="Shen M."/>
            <person name="Pai G."/>
            <person name="Van Aken S."/>
            <person name="Umayam L."/>
            <person name="Tallon L.J."/>
            <person name="Gill J.E."/>
            <person name="Adams M.D."/>
            <person name="Carrera A.J."/>
            <person name="Creasy T.H."/>
            <person name="Goodman H.M."/>
            <person name="Somerville C.R."/>
            <person name="Copenhaver G.P."/>
            <person name="Preuss D."/>
            <person name="Nierman W.C."/>
            <person name="White O."/>
            <person name="Eisen J.A."/>
            <person name="Salzberg S.L."/>
            <person name="Fraser C.M."/>
            <person name="Venter J.C."/>
        </authorList>
    </citation>
    <scope>NUCLEOTIDE SEQUENCE [LARGE SCALE GENOMIC DNA]</scope>
    <source>
        <strain>cv. Columbia</strain>
    </source>
</reference>
<reference key="2">
    <citation type="journal article" date="2017" name="Plant J.">
        <title>Araport11: a complete reannotation of the Arabidopsis thaliana reference genome.</title>
        <authorList>
            <person name="Cheng C.Y."/>
            <person name="Krishnakumar V."/>
            <person name="Chan A.P."/>
            <person name="Thibaud-Nissen F."/>
            <person name="Schobel S."/>
            <person name="Town C.D."/>
        </authorList>
    </citation>
    <scope>GENOME REANNOTATION</scope>
    <source>
        <strain>cv. Columbia</strain>
    </source>
</reference>
<reference key="3">
    <citation type="journal article" date="2003" name="Science">
        <title>Empirical analysis of transcriptional activity in the Arabidopsis genome.</title>
        <authorList>
            <person name="Yamada K."/>
            <person name="Lim J."/>
            <person name="Dale J.M."/>
            <person name="Chen H."/>
            <person name="Shinn P."/>
            <person name="Palm C.J."/>
            <person name="Southwick A.M."/>
            <person name="Wu H.C."/>
            <person name="Kim C.J."/>
            <person name="Nguyen M."/>
            <person name="Pham P.K."/>
            <person name="Cheuk R.F."/>
            <person name="Karlin-Newmann G."/>
            <person name="Liu S.X."/>
            <person name="Lam B."/>
            <person name="Sakano H."/>
            <person name="Wu T."/>
            <person name="Yu G."/>
            <person name="Miranda M."/>
            <person name="Quach H.L."/>
            <person name="Tripp M."/>
            <person name="Chang C.H."/>
            <person name="Lee J.M."/>
            <person name="Toriumi M.J."/>
            <person name="Chan M.M."/>
            <person name="Tang C.C."/>
            <person name="Onodera C.S."/>
            <person name="Deng J.M."/>
            <person name="Akiyama K."/>
            <person name="Ansari Y."/>
            <person name="Arakawa T."/>
            <person name="Banh J."/>
            <person name="Banno F."/>
            <person name="Bowser L."/>
            <person name="Brooks S.Y."/>
            <person name="Carninci P."/>
            <person name="Chao Q."/>
            <person name="Choy N."/>
            <person name="Enju A."/>
            <person name="Goldsmith A.D."/>
            <person name="Gurjal M."/>
            <person name="Hansen N.F."/>
            <person name="Hayashizaki Y."/>
            <person name="Johnson-Hopson C."/>
            <person name="Hsuan V.W."/>
            <person name="Iida K."/>
            <person name="Karnes M."/>
            <person name="Khan S."/>
            <person name="Koesema E."/>
            <person name="Ishida J."/>
            <person name="Jiang P.X."/>
            <person name="Jones T."/>
            <person name="Kawai J."/>
            <person name="Kamiya A."/>
            <person name="Meyers C."/>
            <person name="Nakajima M."/>
            <person name="Narusaka M."/>
            <person name="Seki M."/>
            <person name="Sakurai T."/>
            <person name="Satou M."/>
            <person name="Tamse R."/>
            <person name="Vaysberg M."/>
            <person name="Wallender E.K."/>
            <person name="Wong C."/>
            <person name="Yamamura Y."/>
            <person name="Yuan S."/>
            <person name="Shinozaki K."/>
            <person name="Davis R.W."/>
            <person name="Theologis A."/>
            <person name="Ecker J.R."/>
        </authorList>
    </citation>
    <scope>NUCLEOTIDE SEQUENCE [LARGE SCALE MRNA]</scope>
    <source>
        <strain>cv. Columbia</strain>
    </source>
</reference>
<reference key="4">
    <citation type="journal article" date="2003" name="Plant Physiol.">
        <title>Members of the Arabidopsis-SKP1-like gene family exhibit a variety of expression patterns and may play diverse roles in Arabidopsis.</title>
        <authorList>
            <person name="Zhao D."/>
            <person name="Ni W."/>
            <person name="Feng B."/>
            <person name="Han T."/>
            <person name="Petrasek M.G."/>
            <person name="Ma H."/>
        </authorList>
    </citation>
    <scope>GENE FAMILY</scope>
    <scope>NOMENCLATURE</scope>
    <scope>TISSUE SPECIFICITY</scope>
    <scope>DEVELOPMENTAL STAGE</scope>
</reference>
<reference key="5">
    <citation type="journal article" date="2004" name="Plant Cell Physiol.">
        <title>Expression and interaction analysis of Arabidopsis Skp1-related genes.</title>
        <authorList>
            <person name="Takahashi N."/>
            <person name="Kuroda H."/>
            <person name="Kuromori T."/>
            <person name="Hirayama T."/>
            <person name="Seki M."/>
            <person name="Shinozaki K."/>
            <person name="Shimada H."/>
            <person name="Matsui M."/>
        </authorList>
    </citation>
    <scope>INTERACTION WITH ADO3/FKF1 AND AT3G61590</scope>
</reference>
<dbReference type="EMBL" id="AC006053">
    <property type="protein sequence ID" value="AAD31370.1"/>
    <property type="molecule type" value="Genomic_DNA"/>
</dbReference>
<dbReference type="EMBL" id="CP002685">
    <property type="protein sequence ID" value="AEC07739.1"/>
    <property type="molecule type" value="Genomic_DNA"/>
</dbReference>
<dbReference type="EMBL" id="AY052700">
    <property type="protein sequence ID" value="AAK96604.1"/>
    <property type="molecule type" value="mRNA"/>
</dbReference>
<dbReference type="EMBL" id="AY139806">
    <property type="protein sequence ID" value="AAM98112.1"/>
    <property type="molecule type" value="mRNA"/>
</dbReference>
<dbReference type="PIR" id="F84651">
    <property type="entry name" value="F84651"/>
</dbReference>
<dbReference type="RefSeq" id="NP_565604.1">
    <property type="nucleotide sequence ID" value="NM_128129.2"/>
</dbReference>
<dbReference type="SMR" id="Q9SL93"/>
<dbReference type="BioGRID" id="2463">
    <property type="interactions" value="62"/>
</dbReference>
<dbReference type="ComplexPortal" id="CPX-1430">
    <property type="entry name" value="SCF(COI1) ubiquitin ligase complex, variant CUL1-RBX1A-ASK3"/>
</dbReference>
<dbReference type="ComplexPortal" id="CPX-1451">
    <property type="entry name" value="SCF(COI1) ubiquitin ligase complex, variant CUL1-RBX1B-ASK3"/>
</dbReference>
<dbReference type="ComplexPortal" id="CPX-1473">
    <property type="entry name" value="SCF(COI1) ubiquitin ligase complex, variant CUL2-RBX1A-ASK3"/>
</dbReference>
<dbReference type="ComplexPortal" id="CPX-1494">
    <property type="entry name" value="SCF(COI1) ubiquitin ligase complex, variant CUL2-RBX1B-ASK3"/>
</dbReference>
<dbReference type="ComplexPortal" id="CPX-1516">
    <property type="entry name" value="SCF(TIR1) ubiquitin ligase complex, variant CUL1-RBX1A-ASK3"/>
</dbReference>
<dbReference type="ComplexPortal" id="CPX-1537">
    <property type="entry name" value="SCF(TIR1) ubiquitin ligase complex, variant CUL1-RBX1B-ASK3"/>
</dbReference>
<dbReference type="ComplexPortal" id="CPX-1559">
    <property type="entry name" value="SCF(TIR1) ubiquitin ligase complex, variant CUL2-RBX1A-ASK3"/>
</dbReference>
<dbReference type="ComplexPortal" id="CPX-1580">
    <property type="entry name" value="SCF(TIR1) ubiquitin ligase complex, variant CUL2-RBX1B-ASK3"/>
</dbReference>
<dbReference type="FunCoup" id="Q9SL93">
    <property type="interactions" value="2561"/>
</dbReference>
<dbReference type="IntAct" id="Q9SL93">
    <property type="interactions" value="18"/>
</dbReference>
<dbReference type="STRING" id="3702.Q9SL93"/>
<dbReference type="PaxDb" id="3702-AT2G25700.1"/>
<dbReference type="ProteomicsDB" id="246794"/>
<dbReference type="EnsemblPlants" id="AT2G25700.1">
    <property type="protein sequence ID" value="AT2G25700.1"/>
    <property type="gene ID" value="AT2G25700"/>
</dbReference>
<dbReference type="GeneID" id="817111"/>
<dbReference type="Gramene" id="AT2G25700.1">
    <property type="protein sequence ID" value="AT2G25700.1"/>
    <property type="gene ID" value="AT2G25700"/>
</dbReference>
<dbReference type="KEGG" id="ath:AT2G25700"/>
<dbReference type="Araport" id="AT2G25700"/>
<dbReference type="TAIR" id="AT2G25700">
    <property type="gene designation" value="SK3"/>
</dbReference>
<dbReference type="eggNOG" id="KOG1724">
    <property type="taxonomic scope" value="Eukaryota"/>
</dbReference>
<dbReference type="HOGENOM" id="CLU_059252_6_1_1"/>
<dbReference type="InParanoid" id="Q9SL93"/>
<dbReference type="OMA" id="LHIEYSC"/>
<dbReference type="OrthoDB" id="7827685at2759"/>
<dbReference type="PhylomeDB" id="Q9SL93"/>
<dbReference type="UniPathway" id="UPA00143"/>
<dbReference type="PRO" id="PR:Q9SL93"/>
<dbReference type="Proteomes" id="UP000006548">
    <property type="component" value="Chromosome 2"/>
</dbReference>
<dbReference type="ExpressionAtlas" id="Q9SL93">
    <property type="expression patterns" value="baseline and differential"/>
</dbReference>
<dbReference type="GO" id="GO:0005634">
    <property type="term" value="C:nucleus"/>
    <property type="evidence" value="ECO:0007669"/>
    <property type="project" value="UniProtKB-SubCell"/>
</dbReference>
<dbReference type="GO" id="GO:0019005">
    <property type="term" value="C:SCF ubiquitin ligase complex"/>
    <property type="evidence" value="ECO:0000250"/>
    <property type="project" value="ComplexPortal"/>
</dbReference>
<dbReference type="GO" id="GO:0009734">
    <property type="term" value="P:auxin-activated signaling pathway"/>
    <property type="evidence" value="ECO:0000303"/>
    <property type="project" value="ComplexPortal"/>
</dbReference>
<dbReference type="GO" id="GO:0009867">
    <property type="term" value="P:jasmonic acid mediated signaling pathway"/>
    <property type="evidence" value="ECO:0000315"/>
    <property type="project" value="ComplexPortal"/>
</dbReference>
<dbReference type="GO" id="GO:0016567">
    <property type="term" value="P:protein ubiquitination"/>
    <property type="evidence" value="ECO:0007669"/>
    <property type="project" value="UniProtKB-UniPathway"/>
</dbReference>
<dbReference type="GO" id="GO:0009733">
    <property type="term" value="P:response to auxin"/>
    <property type="evidence" value="ECO:0000303"/>
    <property type="project" value="ComplexPortal"/>
</dbReference>
<dbReference type="GO" id="GO:0009753">
    <property type="term" value="P:response to jasmonic acid"/>
    <property type="evidence" value="ECO:0000315"/>
    <property type="project" value="ComplexPortal"/>
</dbReference>
<dbReference type="GO" id="GO:0006511">
    <property type="term" value="P:ubiquitin-dependent protein catabolic process"/>
    <property type="evidence" value="ECO:0007669"/>
    <property type="project" value="InterPro"/>
</dbReference>
<dbReference type="CDD" id="cd18322">
    <property type="entry name" value="BTB_POZ_SKP1"/>
    <property type="match status" value="1"/>
</dbReference>
<dbReference type="FunFam" id="3.30.710.10:FF:000057">
    <property type="entry name" value="SKP1-like protein 1A"/>
    <property type="match status" value="1"/>
</dbReference>
<dbReference type="Gene3D" id="3.30.710.10">
    <property type="entry name" value="Potassium Channel Kv1.1, Chain A"/>
    <property type="match status" value="1"/>
</dbReference>
<dbReference type="InterPro" id="IPR016897">
    <property type="entry name" value="SKP1"/>
</dbReference>
<dbReference type="InterPro" id="IPR001232">
    <property type="entry name" value="SKP1-like"/>
</dbReference>
<dbReference type="InterPro" id="IPR036296">
    <property type="entry name" value="SKP1-like_dim_sf"/>
</dbReference>
<dbReference type="InterPro" id="IPR011333">
    <property type="entry name" value="SKP1/BTB/POZ_sf"/>
</dbReference>
<dbReference type="InterPro" id="IPR016072">
    <property type="entry name" value="Skp1_comp_dimer"/>
</dbReference>
<dbReference type="InterPro" id="IPR016073">
    <property type="entry name" value="Skp1_comp_POZ"/>
</dbReference>
<dbReference type="PANTHER" id="PTHR11165">
    <property type="entry name" value="SKP1"/>
    <property type="match status" value="1"/>
</dbReference>
<dbReference type="Pfam" id="PF01466">
    <property type="entry name" value="Skp1"/>
    <property type="match status" value="1"/>
</dbReference>
<dbReference type="Pfam" id="PF03931">
    <property type="entry name" value="Skp1_POZ"/>
    <property type="match status" value="1"/>
</dbReference>
<dbReference type="PIRSF" id="PIRSF028729">
    <property type="entry name" value="E3_ubiquit_lig_SCF_Skp"/>
    <property type="match status" value="1"/>
</dbReference>
<dbReference type="SMART" id="SM00512">
    <property type="entry name" value="Skp1"/>
    <property type="match status" value="1"/>
</dbReference>
<dbReference type="SUPFAM" id="SSF54695">
    <property type="entry name" value="POZ domain"/>
    <property type="match status" value="1"/>
</dbReference>
<dbReference type="SUPFAM" id="SSF81382">
    <property type="entry name" value="Skp1 dimerisation domain-like"/>
    <property type="match status" value="1"/>
</dbReference>
<sequence>MAETKKMIILKSSDGESFEVEEAVAVESQTIKHMIEDDCVDNGIPLPNVTGAILAKVIEYCKKHVEAAAEAGGDKDFYGSTENHELKTWDNDFVKVDHPTLFDLLRAANYLNISGLLDLTCKAVADQMRGKTPAQMREHFNIKNDYTPEEEAEVRNENRWAFE</sequence>